<gene>
    <name evidence="1" type="primary">iolG2</name>
    <name type="ordered locus">Mvan_4020</name>
</gene>
<dbReference type="EC" id="1.1.1.18" evidence="1"/>
<dbReference type="EMBL" id="CP000511">
    <property type="protein sequence ID" value="ABM14797.1"/>
    <property type="molecule type" value="Genomic_DNA"/>
</dbReference>
<dbReference type="RefSeq" id="WP_011781177.1">
    <property type="nucleotide sequence ID" value="NZ_JACKSD010000018.1"/>
</dbReference>
<dbReference type="SMR" id="A1TC97"/>
<dbReference type="STRING" id="350058.Mvan_4020"/>
<dbReference type="KEGG" id="mva:Mvan_4020"/>
<dbReference type="eggNOG" id="COG0673">
    <property type="taxonomic scope" value="Bacteria"/>
</dbReference>
<dbReference type="HOGENOM" id="CLU_023194_0_1_11"/>
<dbReference type="Proteomes" id="UP000009159">
    <property type="component" value="Chromosome"/>
</dbReference>
<dbReference type="GO" id="GO:0050112">
    <property type="term" value="F:inositol 2-dehydrogenase (NAD+) activity"/>
    <property type="evidence" value="ECO:0007669"/>
    <property type="project" value="UniProtKB-UniRule"/>
</dbReference>
<dbReference type="GO" id="GO:0000166">
    <property type="term" value="F:nucleotide binding"/>
    <property type="evidence" value="ECO:0007669"/>
    <property type="project" value="InterPro"/>
</dbReference>
<dbReference type="GO" id="GO:0019310">
    <property type="term" value="P:inositol catabolic process"/>
    <property type="evidence" value="ECO:0007669"/>
    <property type="project" value="UniProtKB-UniRule"/>
</dbReference>
<dbReference type="Gene3D" id="3.30.360.10">
    <property type="entry name" value="Dihydrodipicolinate Reductase, domain 2"/>
    <property type="match status" value="1"/>
</dbReference>
<dbReference type="Gene3D" id="3.40.50.720">
    <property type="entry name" value="NAD(P)-binding Rossmann-like Domain"/>
    <property type="match status" value="1"/>
</dbReference>
<dbReference type="HAMAP" id="MF_01671">
    <property type="entry name" value="IolG"/>
    <property type="match status" value="1"/>
</dbReference>
<dbReference type="InterPro" id="IPR050424">
    <property type="entry name" value="Gfo-Idh-MocA_inositol_DH"/>
</dbReference>
<dbReference type="InterPro" id="IPR004104">
    <property type="entry name" value="Gfo/Idh/MocA-like_OxRdtase_C"/>
</dbReference>
<dbReference type="InterPro" id="IPR000683">
    <property type="entry name" value="Gfo/Idh/MocA-like_OxRdtase_N"/>
</dbReference>
<dbReference type="InterPro" id="IPR023794">
    <property type="entry name" value="MI/DCI_dehydrogenase"/>
</dbReference>
<dbReference type="InterPro" id="IPR036291">
    <property type="entry name" value="NAD(P)-bd_dom_sf"/>
</dbReference>
<dbReference type="PANTHER" id="PTHR43593">
    <property type="match status" value="1"/>
</dbReference>
<dbReference type="PANTHER" id="PTHR43593:SF1">
    <property type="entry name" value="INOSITOL 2-DEHYDROGENASE"/>
    <property type="match status" value="1"/>
</dbReference>
<dbReference type="Pfam" id="PF01408">
    <property type="entry name" value="GFO_IDH_MocA"/>
    <property type="match status" value="1"/>
</dbReference>
<dbReference type="Pfam" id="PF02894">
    <property type="entry name" value="GFO_IDH_MocA_C"/>
    <property type="match status" value="1"/>
</dbReference>
<dbReference type="SUPFAM" id="SSF55347">
    <property type="entry name" value="Glyceraldehyde-3-phosphate dehydrogenase-like, C-terminal domain"/>
    <property type="match status" value="1"/>
</dbReference>
<dbReference type="SUPFAM" id="SSF51735">
    <property type="entry name" value="NAD(P)-binding Rossmann-fold domains"/>
    <property type="match status" value="1"/>
</dbReference>
<feature type="chain" id="PRO_0000352578" description="Inositol 2-dehydrogenase 2">
    <location>
        <begin position="1"/>
        <end position="342"/>
    </location>
</feature>
<organism>
    <name type="scientific">Mycolicibacterium vanbaalenii (strain DSM 7251 / JCM 13017 / BCRC 16820 / KCTC 9966 / NRRL B-24157 / PYR-1)</name>
    <name type="common">Mycobacterium vanbaalenii</name>
    <dbReference type="NCBI Taxonomy" id="350058"/>
    <lineage>
        <taxon>Bacteria</taxon>
        <taxon>Bacillati</taxon>
        <taxon>Actinomycetota</taxon>
        <taxon>Actinomycetes</taxon>
        <taxon>Mycobacteriales</taxon>
        <taxon>Mycobacteriaceae</taxon>
        <taxon>Mycolicibacterium</taxon>
    </lineage>
</organism>
<protein>
    <recommendedName>
        <fullName evidence="1">Inositol 2-dehydrogenase 2</fullName>
        <ecNumber evidence="1">1.1.1.18</ecNumber>
    </recommendedName>
    <alternativeName>
        <fullName evidence="1">Myo-inositol 2-dehydrogenase 2</fullName>
        <shortName evidence="1">MI 2-dehydrogenase 2</shortName>
    </alternativeName>
</protein>
<reference key="1">
    <citation type="submission" date="2006-12" db="EMBL/GenBank/DDBJ databases">
        <title>Complete sequence of Mycobacterium vanbaalenii PYR-1.</title>
        <authorList>
            <consortium name="US DOE Joint Genome Institute"/>
            <person name="Copeland A."/>
            <person name="Lucas S."/>
            <person name="Lapidus A."/>
            <person name="Barry K."/>
            <person name="Detter J.C."/>
            <person name="Glavina del Rio T."/>
            <person name="Hammon N."/>
            <person name="Israni S."/>
            <person name="Dalin E."/>
            <person name="Tice H."/>
            <person name="Pitluck S."/>
            <person name="Singan V."/>
            <person name="Schmutz J."/>
            <person name="Larimer F."/>
            <person name="Land M."/>
            <person name="Hauser L."/>
            <person name="Kyrpides N."/>
            <person name="Anderson I.J."/>
            <person name="Miller C."/>
            <person name="Richardson P."/>
        </authorList>
    </citation>
    <scope>NUCLEOTIDE SEQUENCE [LARGE SCALE GENOMIC DNA]</scope>
    <source>
        <strain>DSM 7251 / JCM 13017 / BCRC 16820 / KCTC 9966 / NRRL B-24157 / PYR-1</strain>
    </source>
</reference>
<sequence>MSELRVAVLGVGVMGADHVARITSRISGARVSVVNDYVTEKAEQIASEVDGCRAVVDPLDAIADPEVDAVVLATPGSTHEKQLLACLDHRKPVMCEKPLTTDVFTSLEIARREAELECPLIQVGFMRRFDDEYMRLKALLDGGELGQPLVMHCVHRNPGVPSYFDSSLIVKDSLVHEVDVTRYLFGEEIASVQIVRPVSNPAAPEGVIDPQIAILRTVSGRHVDVELFVTTGVAYEVRTEVVGERGSAMIGLDVGLIRKSAPGTWGGLIAPGFRERFGRAYDTEIQRWVDAVRAGTNIDGPTAWDGYAAAAVCAAGVESLESGLPVPVHLAERPDRSTIRPR</sequence>
<name>IOLG2_MYCVP</name>
<keyword id="KW-0520">NAD</keyword>
<keyword id="KW-0560">Oxidoreductase</keyword>
<accession>A1TC97</accession>
<proteinExistence type="inferred from homology"/>
<comment type="function">
    <text evidence="1">Involved in the oxidation of myo-inositol (MI) to 2-keto-myo-inositol (2KMI or 2-inosose).</text>
</comment>
<comment type="catalytic activity">
    <reaction evidence="1">
        <text>myo-inositol + NAD(+) = scyllo-inosose + NADH + H(+)</text>
        <dbReference type="Rhea" id="RHEA:16949"/>
        <dbReference type="ChEBI" id="CHEBI:15378"/>
        <dbReference type="ChEBI" id="CHEBI:17268"/>
        <dbReference type="ChEBI" id="CHEBI:17811"/>
        <dbReference type="ChEBI" id="CHEBI:57540"/>
        <dbReference type="ChEBI" id="CHEBI:57945"/>
        <dbReference type="EC" id="1.1.1.18"/>
    </reaction>
</comment>
<comment type="subunit">
    <text evidence="1">Homotetramer.</text>
</comment>
<comment type="similarity">
    <text evidence="1">Belongs to the Gfo/Idh/MocA family.</text>
</comment>
<evidence type="ECO:0000255" key="1">
    <source>
        <dbReference type="HAMAP-Rule" id="MF_01671"/>
    </source>
</evidence>